<feature type="initiator methionine" description="Removed" evidence="1">
    <location>
        <position position="1"/>
    </location>
</feature>
<feature type="chain" id="PRO_0000268897" description="Sigma factor-binding protein Crl">
    <location>
        <begin position="2"/>
        <end position="133"/>
    </location>
</feature>
<feature type="region of interest" description="Essential for activity" evidence="2">
    <location>
        <begin position="99"/>
        <end position="122"/>
    </location>
</feature>
<feature type="coiled-coil region" evidence="2">
    <location>
        <begin position="90"/>
        <end position="116"/>
    </location>
</feature>
<keyword id="KW-0010">Activator</keyword>
<keyword id="KW-0175">Coiled coil</keyword>
<keyword id="KW-0963">Cytoplasm</keyword>
<keyword id="KW-1185">Reference proteome</keyword>
<keyword id="KW-0804">Transcription</keyword>
<keyword id="KW-0805">Transcription regulation</keyword>
<proteinExistence type="inferred from homology"/>
<name>CRL_ECO57</name>
<organism>
    <name type="scientific">Escherichia coli O157:H7</name>
    <dbReference type="NCBI Taxonomy" id="83334"/>
    <lineage>
        <taxon>Bacteria</taxon>
        <taxon>Pseudomonadati</taxon>
        <taxon>Pseudomonadota</taxon>
        <taxon>Gammaproteobacteria</taxon>
        <taxon>Enterobacterales</taxon>
        <taxon>Enterobacteriaceae</taxon>
        <taxon>Escherichia</taxon>
    </lineage>
</organism>
<accession>Q8X7N6</accession>
<accession>Q7AHG1</accession>
<reference key="1">
    <citation type="journal article" date="2001" name="Nature">
        <title>Genome sequence of enterohaemorrhagic Escherichia coli O157:H7.</title>
        <authorList>
            <person name="Perna N.T."/>
            <person name="Plunkett G. III"/>
            <person name="Burland V."/>
            <person name="Mau B."/>
            <person name="Glasner J.D."/>
            <person name="Rose D.J."/>
            <person name="Mayhew G.F."/>
            <person name="Evans P.S."/>
            <person name="Gregor J."/>
            <person name="Kirkpatrick H.A."/>
            <person name="Posfai G."/>
            <person name="Hackett J."/>
            <person name="Klink S."/>
            <person name="Boutin A."/>
            <person name="Shao Y."/>
            <person name="Miller L."/>
            <person name="Grotbeck E.J."/>
            <person name="Davis N.W."/>
            <person name="Lim A."/>
            <person name="Dimalanta E.T."/>
            <person name="Potamousis K."/>
            <person name="Apodaca J."/>
            <person name="Anantharaman T.S."/>
            <person name="Lin J."/>
            <person name="Yen G."/>
            <person name="Schwartz D.C."/>
            <person name="Welch R.A."/>
            <person name="Blattner F.R."/>
        </authorList>
    </citation>
    <scope>NUCLEOTIDE SEQUENCE [LARGE SCALE GENOMIC DNA]</scope>
    <source>
        <strain>O157:H7 / EDL933 / ATCC 700927 / EHEC</strain>
    </source>
</reference>
<reference key="2">
    <citation type="journal article" date="2001" name="DNA Res.">
        <title>Complete genome sequence of enterohemorrhagic Escherichia coli O157:H7 and genomic comparison with a laboratory strain K-12.</title>
        <authorList>
            <person name="Hayashi T."/>
            <person name="Makino K."/>
            <person name="Ohnishi M."/>
            <person name="Kurokawa K."/>
            <person name="Ishii K."/>
            <person name="Yokoyama K."/>
            <person name="Han C.-G."/>
            <person name="Ohtsubo E."/>
            <person name="Nakayama K."/>
            <person name="Murata T."/>
            <person name="Tanaka M."/>
            <person name="Tobe T."/>
            <person name="Iida T."/>
            <person name="Takami H."/>
            <person name="Honda T."/>
            <person name="Sasakawa C."/>
            <person name="Ogasawara N."/>
            <person name="Yasunaga T."/>
            <person name="Kuhara S."/>
            <person name="Shiba T."/>
            <person name="Hattori M."/>
            <person name="Shinagawa H."/>
        </authorList>
    </citation>
    <scope>NUCLEOTIDE SEQUENCE [LARGE SCALE GENOMIC DNA]</scope>
    <source>
        <strain>O157:H7 / Sakai / RIMD 0509952 / EHEC</strain>
    </source>
</reference>
<comment type="function">
    <text evidence="2">Binds to the sigma-S subunit of RNA polymerase, activating expression of sigma-S-regulated genes. Stimulates RNA polymerase holoenzyme formation and may bind to several other sigma factors, such as sigma-70 and sigma-32.</text>
</comment>
<comment type="subcellular location">
    <subcellularLocation>
        <location evidence="2">Cytoplasm</location>
    </subcellularLocation>
</comment>
<comment type="similarity">
    <text evidence="2">Belongs to the Crl family.</text>
</comment>
<protein>
    <recommendedName>
        <fullName evidence="2">Sigma factor-binding protein Crl</fullName>
    </recommendedName>
</protein>
<sequence>MTLPSGHPKSRLIKKFTVLGPYIREGKCEDNRFFFDCLAVCVNVKPAPEVREFWGWWMELEAQESRFTYSYQFGLFDKAGDWKSVPVKDTEVVERLEHTLREFHEKLRELLTTLNLKLEPADDFRDEPVKLTA</sequence>
<evidence type="ECO:0000250" key="1"/>
<evidence type="ECO:0000255" key="2">
    <source>
        <dbReference type="HAMAP-Rule" id="MF_01178"/>
    </source>
</evidence>
<gene>
    <name evidence="2" type="primary">crl</name>
    <name type="ordered locus">Z0301</name>
    <name type="ordered locus">ECs0267</name>
</gene>
<dbReference type="EMBL" id="AE005174">
    <property type="protein sequence ID" value="AAG54565.1"/>
    <property type="molecule type" value="Genomic_DNA"/>
</dbReference>
<dbReference type="EMBL" id="BA000007">
    <property type="protein sequence ID" value="BAB33690.1"/>
    <property type="molecule type" value="Genomic_DNA"/>
</dbReference>
<dbReference type="PIR" id="A85513">
    <property type="entry name" value="A85513"/>
</dbReference>
<dbReference type="PIR" id="C90662">
    <property type="entry name" value="C90662"/>
</dbReference>
<dbReference type="RefSeq" id="NP_308294.1">
    <property type="nucleotide sequence ID" value="NC_002695.1"/>
</dbReference>
<dbReference type="RefSeq" id="WP_000174701.1">
    <property type="nucleotide sequence ID" value="NZ_VOAI01000020.1"/>
</dbReference>
<dbReference type="SMR" id="Q8X7N6"/>
<dbReference type="STRING" id="155864.Z0301"/>
<dbReference type="GeneID" id="914365"/>
<dbReference type="KEGG" id="ece:Z0301"/>
<dbReference type="KEGG" id="ecs:ECs_0267"/>
<dbReference type="PATRIC" id="fig|386585.9.peg.369"/>
<dbReference type="eggNOG" id="ENOG502ZQ8E">
    <property type="taxonomic scope" value="Bacteria"/>
</dbReference>
<dbReference type="HOGENOM" id="CLU_136773_0_0_6"/>
<dbReference type="OMA" id="FWGWWLE"/>
<dbReference type="Proteomes" id="UP000000558">
    <property type="component" value="Chromosome"/>
</dbReference>
<dbReference type="Proteomes" id="UP000002519">
    <property type="component" value="Chromosome"/>
</dbReference>
<dbReference type="GO" id="GO:0005737">
    <property type="term" value="C:cytoplasm"/>
    <property type="evidence" value="ECO:0007669"/>
    <property type="project" value="UniProtKB-SubCell"/>
</dbReference>
<dbReference type="GO" id="GO:0045893">
    <property type="term" value="P:positive regulation of DNA-templated transcription"/>
    <property type="evidence" value="ECO:0007669"/>
    <property type="project" value="UniProtKB-UniRule"/>
</dbReference>
<dbReference type="FunFam" id="3.30.310.230:FF:000001">
    <property type="entry name" value="Sigma factor-binding protein Crl"/>
    <property type="match status" value="1"/>
</dbReference>
<dbReference type="Gene3D" id="3.30.310.230">
    <property type="entry name" value="Sigma factor-binding protein Crl monomer"/>
    <property type="match status" value="1"/>
</dbReference>
<dbReference type="HAMAP" id="MF_01178">
    <property type="entry name" value="Crl"/>
    <property type="match status" value="1"/>
</dbReference>
<dbReference type="InterPro" id="IPR009986">
    <property type="entry name" value="Tscrpt_reg_Crl"/>
</dbReference>
<dbReference type="InterPro" id="IPR038208">
    <property type="entry name" value="Tscrpt_reg_Crl_sf"/>
</dbReference>
<dbReference type="NCBIfam" id="NF008217">
    <property type="entry name" value="PRK10984.1"/>
    <property type="match status" value="1"/>
</dbReference>
<dbReference type="Pfam" id="PF07417">
    <property type="entry name" value="Crl"/>
    <property type="match status" value="1"/>
</dbReference>